<name>COBQ_MARN8</name>
<keyword id="KW-0169">Cobalamin biosynthesis</keyword>
<keyword id="KW-0315">Glutamine amidotransferase</keyword>
<reference key="1">
    <citation type="journal article" date="2011" name="Appl. Environ. Microbiol.">
        <title>Genomic potential of Marinobacter aquaeolei, a biogeochemical 'opportunitroph'.</title>
        <authorList>
            <person name="Singer E."/>
            <person name="Webb E.A."/>
            <person name="Nelson W.C."/>
            <person name="Heidelberg J.F."/>
            <person name="Ivanova N."/>
            <person name="Pati A."/>
            <person name="Edwards K.J."/>
        </authorList>
    </citation>
    <scope>NUCLEOTIDE SEQUENCE [LARGE SCALE GENOMIC DNA]</scope>
    <source>
        <strain>ATCC 700491 / DSM 11845 / VT8</strain>
    </source>
</reference>
<protein>
    <recommendedName>
        <fullName evidence="1">Cobyric acid synthase</fullName>
    </recommendedName>
</protein>
<accession>A1TXB6</accession>
<sequence>MPTLMVQGTTSDAGKTTVVAALCRWLARQGVSVAPFKPQNMALNSAVTVDGGEIGRSTALQALACGLEPHSDMNPVLLKPQSDCGAQVILRGKVHGNMDALDYHAYKAEAMNSVMASWRDLSARYDVVIAEGAGSPAEINLRANDIANMGFAEAADCPVLLVGDIDKGGVFAQLVGTLALISDSERGRTAGFVINRFRGDIALLEPGLDWLTEHTGKPVFGVLPYLHGLVIDSEDSVSAAGTSEAGALKVVVPVLPRISNHNDFDPLRLHPGVDLVFVGTDEPIPPADLIILPGSKSTRHDLQWLKQQGWPEAIQKHLRYGGKLLGICGGFQMLGLKVEDPEGLEGEVGTTKGLALFEMVTRMVPGKQLRMVNGGLTSHVASTAVTGALKGYEMHNGVTEGAALVRPFAELEGRPDGAVSADGQVAGTYIHGVFDEPAACKAILAWAGLKTQGEQSVDYQRHRLQQLDRLADQVDQCLDTDRLRSLLQL</sequence>
<evidence type="ECO:0000255" key="1">
    <source>
        <dbReference type="HAMAP-Rule" id="MF_00028"/>
    </source>
</evidence>
<feature type="chain" id="PRO_0000332345" description="Cobyric acid synthase">
    <location>
        <begin position="1"/>
        <end position="489"/>
    </location>
</feature>
<feature type="domain" description="GATase cobBQ-type" evidence="1">
    <location>
        <begin position="247"/>
        <end position="439"/>
    </location>
</feature>
<feature type="active site" description="Nucleophile" evidence="1">
    <location>
        <position position="328"/>
    </location>
</feature>
<feature type="active site" evidence="1">
    <location>
        <position position="431"/>
    </location>
</feature>
<comment type="function">
    <text evidence="1">Catalyzes amidations at positions B, D, E, and G on adenosylcobyrinic A,C-diamide. NH(2) groups are provided by glutamine, and one molecule of ATP is hydrogenolyzed for each amidation.</text>
</comment>
<comment type="pathway">
    <text evidence="1">Cofactor biosynthesis; adenosylcobalamin biosynthesis.</text>
</comment>
<comment type="similarity">
    <text evidence="1">Belongs to the CobB/CobQ family. CobQ subfamily.</text>
</comment>
<gene>
    <name evidence="1" type="primary">cobQ</name>
    <name type="ordered locus">Maqu_0279</name>
</gene>
<organism>
    <name type="scientific">Marinobacter nauticus (strain ATCC 700491 / DSM 11845 / VT8)</name>
    <name type="common">Marinobacter aquaeolei</name>
    <dbReference type="NCBI Taxonomy" id="351348"/>
    <lineage>
        <taxon>Bacteria</taxon>
        <taxon>Pseudomonadati</taxon>
        <taxon>Pseudomonadota</taxon>
        <taxon>Gammaproteobacteria</taxon>
        <taxon>Pseudomonadales</taxon>
        <taxon>Marinobacteraceae</taxon>
        <taxon>Marinobacter</taxon>
    </lineage>
</organism>
<proteinExistence type="inferred from homology"/>
<dbReference type="EMBL" id="CP000514">
    <property type="protein sequence ID" value="ABM17385.1"/>
    <property type="molecule type" value="Genomic_DNA"/>
</dbReference>
<dbReference type="RefSeq" id="WP_011783833.1">
    <property type="nucleotide sequence ID" value="NC_008740.1"/>
</dbReference>
<dbReference type="STRING" id="351348.Maqu_0279"/>
<dbReference type="KEGG" id="maq:Maqu_0279"/>
<dbReference type="eggNOG" id="COG1492">
    <property type="taxonomic scope" value="Bacteria"/>
</dbReference>
<dbReference type="HOGENOM" id="CLU_019250_2_2_6"/>
<dbReference type="OrthoDB" id="9808302at2"/>
<dbReference type="UniPathway" id="UPA00148"/>
<dbReference type="Proteomes" id="UP000000998">
    <property type="component" value="Chromosome"/>
</dbReference>
<dbReference type="GO" id="GO:0015420">
    <property type="term" value="F:ABC-type vitamin B12 transporter activity"/>
    <property type="evidence" value="ECO:0007669"/>
    <property type="project" value="UniProtKB-UniRule"/>
</dbReference>
<dbReference type="GO" id="GO:0003824">
    <property type="term" value="F:catalytic activity"/>
    <property type="evidence" value="ECO:0007669"/>
    <property type="project" value="InterPro"/>
</dbReference>
<dbReference type="GO" id="GO:0009236">
    <property type="term" value="P:cobalamin biosynthetic process"/>
    <property type="evidence" value="ECO:0007669"/>
    <property type="project" value="UniProtKB-UniRule"/>
</dbReference>
<dbReference type="CDD" id="cd05389">
    <property type="entry name" value="CobQ_N"/>
    <property type="match status" value="1"/>
</dbReference>
<dbReference type="CDD" id="cd01750">
    <property type="entry name" value="GATase1_CobQ"/>
    <property type="match status" value="1"/>
</dbReference>
<dbReference type="Gene3D" id="3.40.50.880">
    <property type="match status" value="1"/>
</dbReference>
<dbReference type="Gene3D" id="3.40.50.300">
    <property type="entry name" value="P-loop containing nucleotide triphosphate hydrolases"/>
    <property type="match status" value="1"/>
</dbReference>
<dbReference type="HAMAP" id="MF_00028">
    <property type="entry name" value="CobQ"/>
    <property type="match status" value="1"/>
</dbReference>
<dbReference type="InterPro" id="IPR029062">
    <property type="entry name" value="Class_I_gatase-like"/>
</dbReference>
<dbReference type="InterPro" id="IPR002586">
    <property type="entry name" value="CobQ/CobB/MinD/ParA_Nub-bd_dom"/>
</dbReference>
<dbReference type="InterPro" id="IPR033949">
    <property type="entry name" value="CobQ_GATase1"/>
</dbReference>
<dbReference type="InterPro" id="IPR047045">
    <property type="entry name" value="CobQ_N"/>
</dbReference>
<dbReference type="InterPro" id="IPR004459">
    <property type="entry name" value="CobQ_synth"/>
</dbReference>
<dbReference type="InterPro" id="IPR011698">
    <property type="entry name" value="GATase_3"/>
</dbReference>
<dbReference type="InterPro" id="IPR027417">
    <property type="entry name" value="P-loop_NTPase"/>
</dbReference>
<dbReference type="NCBIfam" id="TIGR00313">
    <property type="entry name" value="cobQ"/>
    <property type="match status" value="1"/>
</dbReference>
<dbReference type="NCBIfam" id="NF001989">
    <property type="entry name" value="PRK00784.1"/>
    <property type="match status" value="1"/>
</dbReference>
<dbReference type="PANTHER" id="PTHR21343:SF1">
    <property type="entry name" value="COBYRIC ACID SYNTHASE"/>
    <property type="match status" value="1"/>
</dbReference>
<dbReference type="PANTHER" id="PTHR21343">
    <property type="entry name" value="DETHIOBIOTIN SYNTHETASE"/>
    <property type="match status" value="1"/>
</dbReference>
<dbReference type="Pfam" id="PF01656">
    <property type="entry name" value="CbiA"/>
    <property type="match status" value="1"/>
</dbReference>
<dbReference type="Pfam" id="PF07685">
    <property type="entry name" value="GATase_3"/>
    <property type="match status" value="1"/>
</dbReference>
<dbReference type="SUPFAM" id="SSF52317">
    <property type="entry name" value="Class I glutamine amidotransferase-like"/>
    <property type="match status" value="1"/>
</dbReference>
<dbReference type="SUPFAM" id="SSF52540">
    <property type="entry name" value="P-loop containing nucleoside triphosphate hydrolases"/>
    <property type="match status" value="1"/>
</dbReference>
<dbReference type="PROSITE" id="PS51274">
    <property type="entry name" value="GATASE_COBBQ"/>
    <property type="match status" value="1"/>
</dbReference>